<comment type="function">
    <text evidence="1">Catalyzes the synthesis of the hydroxymethylpyrimidine phosphate (HMP-P) moiety of thiamine from aminoimidazole ribotide (AIR) in a radical S-adenosyl-L-methionine (SAM)-dependent reaction.</text>
</comment>
<comment type="catalytic activity">
    <reaction evidence="1">
        <text>5-amino-1-(5-phospho-beta-D-ribosyl)imidazole + S-adenosyl-L-methionine = 4-amino-2-methyl-5-(phosphooxymethyl)pyrimidine + CO + 5'-deoxyadenosine + formate + L-methionine + 3 H(+)</text>
        <dbReference type="Rhea" id="RHEA:24840"/>
        <dbReference type="ChEBI" id="CHEBI:15378"/>
        <dbReference type="ChEBI" id="CHEBI:15740"/>
        <dbReference type="ChEBI" id="CHEBI:17245"/>
        <dbReference type="ChEBI" id="CHEBI:17319"/>
        <dbReference type="ChEBI" id="CHEBI:57844"/>
        <dbReference type="ChEBI" id="CHEBI:58354"/>
        <dbReference type="ChEBI" id="CHEBI:59789"/>
        <dbReference type="ChEBI" id="CHEBI:137981"/>
        <dbReference type="EC" id="4.1.99.17"/>
    </reaction>
</comment>
<comment type="cofactor">
    <cofactor evidence="1">
        <name>[4Fe-4S] cluster</name>
        <dbReference type="ChEBI" id="CHEBI:49883"/>
    </cofactor>
    <text evidence="1">Binds 1 [4Fe-4S] cluster per subunit. The cluster is coordinated with 3 cysteines and an exchangeable S-adenosyl-L-methionine.</text>
</comment>
<comment type="pathway">
    <text evidence="1">Cofactor biosynthesis; thiamine diphosphate biosynthesis.</text>
</comment>
<comment type="similarity">
    <text evidence="1">Belongs to the ThiC family.</text>
</comment>
<proteinExistence type="inferred from homology"/>
<reference key="1">
    <citation type="journal article" date="2005" name="J. Bacteriol.">
        <title>Complete genome sequence and analysis of the multiresistant nosocomial pathogen Corynebacterium jeikeium K411, a lipid-requiring bacterium of the human skin flora.</title>
        <authorList>
            <person name="Tauch A."/>
            <person name="Kaiser O."/>
            <person name="Hain T."/>
            <person name="Goesmann A."/>
            <person name="Weisshaar B."/>
            <person name="Albersmeier A."/>
            <person name="Bekel T."/>
            <person name="Bischoff N."/>
            <person name="Brune I."/>
            <person name="Chakraborty T."/>
            <person name="Kalinowski J."/>
            <person name="Meyer F."/>
            <person name="Rupp O."/>
            <person name="Schneiker S."/>
            <person name="Viehoever P."/>
            <person name="Puehler A."/>
        </authorList>
    </citation>
    <scope>NUCLEOTIDE SEQUENCE [LARGE SCALE GENOMIC DNA]</scope>
    <source>
        <strain>K411</strain>
    </source>
</reference>
<keyword id="KW-0004">4Fe-4S</keyword>
<keyword id="KW-0408">Iron</keyword>
<keyword id="KW-0411">Iron-sulfur</keyword>
<keyword id="KW-0456">Lyase</keyword>
<keyword id="KW-0479">Metal-binding</keyword>
<keyword id="KW-1185">Reference proteome</keyword>
<keyword id="KW-0949">S-adenosyl-L-methionine</keyword>
<keyword id="KW-0784">Thiamine biosynthesis</keyword>
<keyword id="KW-0862">Zinc</keyword>
<sequence>MTDTSTQNTATPTDEYGAEIHPKHSFSPIEKTVESFGKTFTLEVPETEIQLDDSPTGPNEPVRIYRTRGPWAEPTKGLEGLRSEWIEARDDVEAYEGRRRNLLDDGNRAVKRGEASEEWKGSTRPTLRAKEGKRVTQMHYARQGIITPEMEYVALREHCDVEKVREQVASGKAIIPNNINHPESEPMIIGNAFTTKINANIGNSAVTSSIREEVDKLRWATRWGADTVMDLSTGNDIHTTREWILRNSPVPIGTVPIYQALEKVDGVAEDLTWEIFRDTVIEQCEQGVDYMTIHAGVRLPFVPLTTKRVTGIVSRGGSIMAGWCLAHHKESFLYENFDELCEIFAKYDVAFSLGDGLRPGSIADANDAAQFAELKTIGELTHRAWEYDVQVMVEGPGHVPLNMVQVNNEKEQEWCGGAPFYTLGPLVTDIAPGYDHITSAIGAANIAMGGTAMLCYVTPKEHLGLPNKDDVKTGVITYKVSAHAADVAKGHPGAHEWDDAMSKARFEFRWHDQFALSLDPDTAQAYHDETLPAEPAKTAHFCSMCGPKFCSMRISQDIRDAFGDEIDEALATDQKQSLVKDLGLPGFGRQSVDGIDSLSAAGEEEMAEEFRRAGSQLYLNRDEAKEVAEDLQKEAAAHGER</sequence>
<name>THIC_CORJK</name>
<evidence type="ECO:0000255" key="1">
    <source>
        <dbReference type="HAMAP-Rule" id="MF_00089"/>
    </source>
</evidence>
<evidence type="ECO:0000256" key="2">
    <source>
        <dbReference type="SAM" id="MobiDB-lite"/>
    </source>
</evidence>
<gene>
    <name evidence="1" type="primary">thiC</name>
    <name type="ordered locus">jk0855</name>
</gene>
<organism>
    <name type="scientific">Corynebacterium jeikeium (strain K411)</name>
    <dbReference type="NCBI Taxonomy" id="306537"/>
    <lineage>
        <taxon>Bacteria</taxon>
        <taxon>Bacillati</taxon>
        <taxon>Actinomycetota</taxon>
        <taxon>Actinomycetes</taxon>
        <taxon>Mycobacteriales</taxon>
        <taxon>Corynebacteriaceae</taxon>
        <taxon>Corynebacterium</taxon>
    </lineage>
</organism>
<dbReference type="EC" id="4.1.99.17" evidence="1"/>
<dbReference type="EMBL" id="CR931997">
    <property type="protein sequence ID" value="CAI37017.1"/>
    <property type="molecule type" value="Genomic_DNA"/>
</dbReference>
<dbReference type="RefSeq" id="WP_011273451.1">
    <property type="nucleotide sequence ID" value="NC_007164.1"/>
</dbReference>
<dbReference type="SMR" id="Q4JVZ0"/>
<dbReference type="STRING" id="306537.jk0855"/>
<dbReference type="KEGG" id="cjk:jk0855"/>
<dbReference type="PATRIC" id="fig|306537.10.peg.866"/>
<dbReference type="eggNOG" id="COG0422">
    <property type="taxonomic scope" value="Bacteria"/>
</dbReference>
<dbReference type="HOGENOM" id="CLU_013181_2_1_11"/>
<dbReference type="OrthoDB" id="9805897at2"/>
<dbReference type="UniPathway" id="UPA00060"/>
<dbReference type="Proteomes" id="UP000000545">
    <property type="component" value="Chromosome"/>
</dbReference>
<dbReference type="GO" id="GO:0005829">
    <property type="term" value="C:cytosol"/>
    <property type="evidence" value="ECO:0007669"/>
    <property type="project" value="TreeGrafter"/>
</dbReference>
<dbReference type="GO" id="GO:0051539">
    <property type="term" value="F:4 iron, 4 sulfur cluster binding"/>
    <property type="evidence" value="ECO:0007669"/>
    <property type="project" value="UniProtKB-KW"/>
</dbReference>
<dbReference type="GO" id="GO:0016830">
    <property type="term" value="F:carbon-carbon lyase activity"/>
    <property type="evidence" value="ECO:0007669"/>
    <property type="project" value="InterPro"/>
</dbReference>
<dbReference type="GO" id="GO:0008270">
    <property type="term" value="F:zinc ion binding"/>
    <property type="evidence" value="ECO:0007669"/>
    <property type="project" value="UniProtKB-UniRule"/>
</dbReference>
<dbReference type="GO" id="GO:0009228">
    <property type="term" value="P:thiamine biosynthetic process"/>
    <property type="evidence" value="ECO:0007669"/>
    <property type="project" value="UniProtKB-KW"/>
</dbReference>
<dbReference type="GO" id="GO:0009229">
    <property type="term" value="P:thiamine diphosphate biosynthetic process"/>
    <property type="evidence" value="ECO:0007669"/>
    <property type="project" value="UniProtKB-UniRule"/>
</dbReference>
<dbReference type="FunFam" id="3.20.20.540:FF:000001">
    <property type="entry name" value="Phosphomethylpyrimidine synthase"/>
    <property type="match status" value="1"/>
</dbReference>
<dbReference type="Gene3D" id="6.10.250.620">
    <property type="match status" value="1"/>
</dbReference>
<dbReference type="Gene3D" id="3.20.20.540">
    <property type="entry name" value="Radical SAM ThiC family, central domain"/>
    <property type="match status" value="1"/>
</dbReference>
<dbReference type="HAMAP" id="MF_00089">
    <property type="entry name" value="ThiC"/>
    <property type="match status" value="1"/>
</dbReference>
<dbReference type="InterPro" id="IPR037509">
    <property type="entry name" value="ThiC"/>
</dbReference>
<dbReference type="InterPro" id="IPR025747">
    <property type="entry name" value="ThiC-associated_dom"/>
</dbReference>
<dbReference type="InterPro" id="IPR038521">
    <property type="entry name" value="ThiC/Bza_core_dom"/>
</dbReference>
<dbReference type="InterPro" id="IPR002817">
    <property type="entry name" value="ThiC/BzaA/B"/>
</dbReference>
<dbReference type="NCBIfam" id="NF006763">
    <property type="entry name" value="PRK09284.1"/>
    <property type="match status" value="1"/>
</dbReference>
<dbReference type="NCBIfam" id="NF009895">
    <property type="entry name" value="PRK13352.1"/>
    <property type="match status" value="1"/>
</dbReference>
<dbReference type="NCBIfam" id="TIGR00190">
    <property type="entry name" value="thiC"/>
    <property type="match status" value="1"/>
</dbReference>
<dbReference type="PANTHER" id="PTHR30557:SF1">
    <property type="entry name" value="PHOSPHOMETHYLPYRIMIDINE SYNTHASE, CHLOROPLASTIC"/>
    <property type="match status" value="1"/>
</dbReference>
<dbReference type="PANTHER" id="PTHR30557">
    <property type="entry name" value="THIAMINE BIOSYNTHESIS PROTEIN THIC"/>
    <property type="match status" value="1"/>
</dbReference>
<dbReference type="Pfam" id="PF13667">
    <property type="entry name" value="ThiC-associated"/>
    <property type="match status" value="1"/>
</dbReference>
<dbReference type="Pfam" id="PF01964">
    <property type="entry name" value="ThiC_Rad_SAM"/>
    <property type="match status" value="1"/>
</dbReference>
<dbReference type="SFLD" id="SFLDF00407">
    <property type="entry name" value="phosphomethylpyrimidine_syntha"/>
    <property type="match status" value="1"/>
</dbReference>
<dbReference type="SFLD" id="SFLDG01114">
    <property type="entry name" value="phosphomethylpyrimidine_syntha"/>
    <property type="match status" value="1"/>
</dbReference>
<dbReference type="SFLD" id="SFLDS00113">
    <property type="entry name" value="Radical_SAM_Phosphomethylpyrim"/>
    <property type="match status" value="1"/>
</dbReference>
<accession>Q4JVZ0</accession>
<protein>
    <recommendedName>
        <fullName evidence="1">Phosphomethylpyrimidine synthase</fullName>
        <ecNumber evidence="1">4.1.99.17</ecNumber>
    </recommendedName>
    <alternativeName>
        <fullName evidence="1">Hydroxymethylpyrimidine phosphate synthase</fullName>
        <shortName evidence="1">HMP-P synthase</shortName>
        <shortName evidence="1">HMP-phosphate synthase</shortName>
        <shortName evidence="1">HMPP synthase</shortName>
    </alternativeName>
    <alternativeName>
        <fullName evidence="1">Thiamine biosynthesis protein ThiC</fullName>
    </alternativeName>
</protein>
<feature type="chain" id="PRO_0000242253" description="Phosphomethylpyrimidine synthase">
    <location>
        <begin position="1"/>
        <end position="641"/>
    </location>
</feature>
<feature type="region of interest" description="Disordered" evidence="2">
    <location>
        <begin position="1"/>
        <end position="25"/>
    </location>
</feature>
<feature type="compositionally biased region" description="Polar residues" evidence="2">
    <location>
        <begin position="1"/>
        <end position="12"/>
    </location>
</feature>
<feature type="binding site" evidence="1">
    <location>
        <position position="200"/>
    </location>
    <ligand>
        <name>substrate</name>
    </ligand>
</feature>
<feature type="binding site" evidence="1">
    <location>
        <position position="229"/>
    </location>
    <ligand>
        <name>substrate</name>
    </ligand>
</feature>
<feature type="binding site" evidence="1">
    <location>
        <position position="258"/>
    </location>
    <ligand>
        <name>substrate</name>
    </ligand>
</feature>
<feature type="binding site" evidence="1">
    <location>
        <position position="294"/>
    </location>
    <ligand>
        <name>substrate</name>
    </ligand>
</feature>
<feature type="binding site" evidence="1">
    <location>
        <begin position="314"/>
        <end position="316"/>
    </location>
    <ligand>
        <name>substrate</name>
    </ligand>
</feature>
<feature type="binding site" evidence="1">
    <location>
        <begin position="355"/>
        <end position="358"/>
    </location>
    <ligand>
        <name>substrate</name>
    </ligand>
</feature>
<feature type="binding site" evidence="1">
    <location>
        <position position="394"/>
    </location>
    <ligand>
        <name>substrate</name>
    </ligand>
</feature>
<feature type="binding site" evidence="1">
    <location>
        <position position="398"/>
    </location>
    <ligand>
        <name>Zn(2+)</name>
        <dbReference type="ChEBI" id="CHEBI:29105"/>
    </ligand>
</feature>
<feature type="binding site" evidence="1">
    <location>
        <position position="421"/>
    </location>
    <ligand>
        <name>substrate</name>
    </ligand>
</feature>
<feature type="binding site" evidence="1">
    <location>
        <position position="462"/>
    </location>
    <ligand>
        <name>Zn(2+)</name>
        <dbReference type="ChEBI" id="CHEBI:29105"/>
    </ligand>
</feature>
<feature type="binding site" evidence="1">
    <location>
        <position position="542"/>
    </location>
    <ligand>
        <name>[4Fe-4S] cluster</name>
        <dbReference type="ChEBI" id="CHEBI:49883"/>
        <note>4Fe-4S-S-AdoMet</note>
    </ligand>
</feature>
<feature type="binding site" evidence="1">
    <location>
        <position position="545"/>
    </location>
    <ligand>
        <name>[4Fe-4S] cluster</name>
        <dbReference type="ChEBI" id="CHEBI:49883"/>
        <note>4Fe-4S-S-AdoMet</note>
    </ligand>
</feature>
<feature type="binding site" evidence="1">
    <location>
        <position position="550"/>
    </location>
    <ligand>
        <name>[4Fe-4S] cluster</name>
        <dbReference type="ChEBI" id="CHEBI:49883"/>
        <note>4Fe-4S-S-AdoMet</note>
    </ligand>
</feature>